<gene>
    <name type="primary">dnaE1</name>
    <name type="synonym">dnaE</name>
    <name type="ordered locus">Rv1547</name>
    <name type="ORF">MTCY48.18c</name>
</gene>
<dbReference type="EC" id="2.7.7.7"/>
<dbReference type="EMBL" id="AL123456">
    <property type="protein sequence ID" value="CCP44311.1"/>
    <property type="molecule type" value="Genomic_DNA"/>
</dbReference>
<dbReference type="PIR" id="H70761">
    <property type="entry name" value="H70761"/>
</dbReference>
<dbReference type="RefSeq" id="NP_216063.1">
    <property type="nucleotide sequence ID" value="NC_000962.3"/>
</dbReference>
<dbReference type="RefSeq" id="WP_003407751.1">
    <property type="nucleotide sequence ID" value="NZ_NVQJ01000004.1"/>
</dbReference>
<dbReference type="PDB" id="5LEW">
    <property type="method" value="X-ray"/>
    <property type="resolution" value="2.80 A"/>
    <property type="chains" value="A=7-933"/>
</dbReference>
<dbReference type="PDB" id="7PU7">
    <property type="method" value="EM"/>
    <property type="resolution" value="2.90 A"/>
    <property type="chains" value="A=1-1184"/>
</dbReference>
<dbReference type="PDB" id="8DJQ">
    <property type="method" value="X-ray"/>
    <property type="resolution" value="2.80 A"/>
    <property type="chains" value="E/F/G/H=946-951"/>
</dbReference>
<dbReference type="PDBsum" id="5LEW"/>
<dbReference type="PDBsum" id="7PU7"/>
<dbReference type="PDBsum" id="8DJQ"/>
<dbReference type="SMR" id="P9WNT7"/>
<dbReference type="FunCoup" id="P9WNT7">
    <property type="interactions" value="42"/>
</dbReference>
<dbReference type="IntAct" id="P9WNT7">
    <property type="interactions" value="1"/>
</dbReference>
<dbReference type="STRING" id="83332.Rv1547"/>
<dbReference type="PaxDb" id="83332-Rv1547"/>
<dbReference type="GeneID" id="886392"/>
<dbReference type="KEGG" id="mtu:Rv1547"/>
<dbReference type="KEGG" id="mtv:RVBD_1547"/>
<dbReference type="TubercuList" id="Rv1547"/>
<dbReference type="eggNOG" id="COG0587">
    <property type="taxonomic scope" value="Bacteria"/>
</dbReference>
<dbReference type="InParanoid" id="P9WNT7"/>
<dbReference type="OrthoDB" id="9803237at2"/>
<dbReference type="PhylomeDB" id="P9WNT7"/>
<dbReference type="Proteomes" id="UP000001584">
    <property type="component" value="Chromosome"/>
</dbReference>
<dbReference type="GO" id="GO:0005737">
    <property type="term" value="C:cytoplasm"/>
    <property type="evidence" value="ECO:0007669"/>
    <property type="project" value="UniProtKB-SubCell"/>
</dbReference>
<dbReference type="GO" id="GO:0009274">
    <property type="term" value="C:peptidoglycan-based cell wall"/>
    <property type="evidence" value="ECO:0007005"/>
    <property type="project" value="MTBBASE"/>
</dbReference>
<dbReference type="GO" id="GO:0005886">
    <property type="term" value="C:plasma membrane"/>
    <property type="evidence" value="ECO:0007005"/>
    <property type="project" value="MTBBASE"/>
</dbReference>
<dbReference type="GO" id="GO:0008408">
    <property type="term" value="F:3'-5' exonuclease activity"/>
    <property type="evidence" value="ECO:0007669"/>
    <property type="project" value="InterPro"/>
</dbReference>
<dbReference type="GO" id="GO:0003887">
    <property type="term" value="F:DNA-directed DNA polymerase activity"/>
    <property type="evidence" value="ECO:0000318"/>
    <property type="project" value="GO_Central"/>
</dbReference>
<dbReference type="GO" id="GO:0003676">
    <property type="term" value="F:nucleic acid binding"/>
    <property type="evidence" value="ECO:0007669"/>
    <property type="project" value="InterPro"/>
</dbReference>
<dbReference type="GO" id="GO:0006260">
    <property type="term" value="P:DNA replication"/>
    <property type="evidence" value="ECO:0007669"/>
    <property type="project" value="UniProtKB-KW"/>
</dbReference>
<dbReference type="CDD" id="cd04485">
    <property type="entry name" value="DnaE_OBF"/>
    <property type="match status" value="1"/>
</dbReference>
<dbReference type="CDD" id="cd12113">
    <property type="entry name" value="PHP_PolIIIA_DnaE3"/>
    <property type="match status" value="1"/>
</dbReference>
<dbReference type="FunFam" id="1.10.150.870:FF:000001">
    <property type="entry name" value="DNA polymerase III subunit alpha"/>
    <property type="match status" value="1"/>
</dbReference>
<dbReference type="FunFam" id="3.20.20.140:FF:000049">
    <property type="entry name" value="DNA polymerase III subunit alpha"/>
    <property type="match status" value="1"/>
</dbReference>
<dbReference type="Gene3D" id="1.10.150.870">
    <property type="match status" value="1"/>
</dbReference>
<dbReference type="Gene3D" id="1.10.10.1600">
    <property type="entry name" value="Bacterial DNA polymerase III alpha subunit, thumb domain"/>
    <property type="match status" value="1"/>
</dbReference>
<dbReference type="Gene3D" id="3.20.20.140">
    <property type="entry name" value="Metal-dependent hydrolases"/>
    <property type="match status" value="1"/>
</dbReference>
<dbReference type="InterPro" id="IPR011708">
    <property type="entry name" value="DNA_pol3_alpha_NTPase_dom"/>
</dbReference>
<dbReference type="InterPro" id="IPR041931">
    <property type="entry name" value="DNA_pol3_alpha_thumb_dom"/>
</dbReference>
<dbReference type="InterPro" id="IPR040982">
    <property type="entry name" value="DNA_pol3_finger"/>
</dbReference>
<dbReference type="InterPro" id="IPR004805">
    <property type="entry name" value="DnaE2/DnaE/PolC"/>
</dbReference>
<dbReference type="InterPro" id="IPR029460">
    <property type="entry name" value="DNAPol_HHH"/>
</dbReference>
<dbReference type="InterPro" id="IPR004365">
    <property type="entry name" value="NA-bd_OB_tRNA"/>
</dbReference>
<dbReference type="InterPro" id="IPR004013">
    <property type="entry name" value="PHP_dom"/>
</dbReference>
<dbReference type="InterPro" id="IPR003141">
    <property type="entry name" value="Pol/His_phosphatase_N"/>
</dbReference>
<dbReference type="InterPro" id="IPR016195">
    <property type="entry name" value="Pol/histidinol_Pase-like"/>
</dbReference>
<dbReference type="NCBIfam" id="TIGR00594">
    <property type="entry name" value="polc"/>
    <property type="match status" value="1"/>
</dbReference>
<dbReference type="NCBIfam" id="NF004226">
    <property type="entry name" value="PRK05673.1"/>
    <property type="match status" value="1"/>
</dbReference>
<dbReference type="PANTHER" id="PTHR32294">
    <property type="entry name" value="DNA POLYMERASE III SUBUNIT ALPHA"/>
    <property type="match status" value="1"/>
</dbReference>
<dbReference type="PANTHER" id="PTHR32294:SF0">
    <property type="entry name" value="DNA POLYMERASE III SUBUNIT ALPHA"/>
    <property type="match status" value="1"/>
</dbReference>
<dbReference type="Pfam" id="PF07733">
    <property type="entry name" value="DNA_pol3_alpha"/>
    <property type="match status" value="1"/>
</dbReference>
<dbReference type="Pfam" id="PF17657">
    <property type="entry name" value="DNA_pol3_finger"/>
    <property type="match status" value="1"/>
</dbReference>
<dbReference type="Pfam" id="PF14579">
    <property type="entry name" value="HHH_6"/>
    <property type="match status" value="1"/>
</dbReference>
<dbReference type="Pfam" id="PF02811">
    <property type="entry name" value="PHP"/>
    <property type="match status" value="1"/>
</dbReference>
<dbReference type="Pfam" id="PF01336">
    <property type="entry name" value="tRNA_anti-codon"/>
    <property type="match status" value="1"/>
</dbReference>
<dbReference type="SMART" id="SM00481">
    <property type="entry name" value="POLIIIAc"/>
    <property type="match status" value="1"/>
</dbReference>
<dbReference type="SUPFAM" id="SSF89550">
    <property type="entry name" value="PHP domain-like"/>
    <property type="match status" value="1"/>
</dbReference>
<accession>P9WNT7</accession>
<accession>L0T6Z6</accession>
<accession>P63977</accession>
<accession>Q10779</accession>
<feature type="chain" id="PRO_0000103329" description="DNA polymerase III subunit alpha">
    <location>
        <begin position="1"/>
        <end position="1184"/>
    </location>
</feature>
<feature type="turn" evidence="6">
    <location>
        <begin position="21"/>
        <end position="23"/>
    </location>
</feature>
<feature type="helix" evidence="6">
    <location>
        <begin position="28"/>
        <end position="37"/>
    </location>
</feature>
<feature type="strand" evidence="6">
    <location>
        <begin position="41"/>
        <end position="45"/>
    </location>
</feature>
<feature type="helix" evidence="6">
    <location>
        <begin position="54"/>
        <end position="63"/>
    </location>
</feature>
<feature type="strand" evidence="6">
    <location>
        <begin position="67"/>
        <end position="76"/>
    </location>
</feature>
<feature type="helix" evidence="6">
    <location>
        <begin position="92"/>
        <end position="97"/>
    </location>
</feature>
<feature type="helix" evidence="6">
    <location>
        <begin position="100"/>
        <end position="103"/>
    </location>
</feature>
<feature type="strand" evidence="6">
    <location>
        <begin position="105"/>
        <end position="114"/>
    </location>
</feature>
<feature type="helix" evidence="6">
    <location>
        <begin position="115"/>
        <end position="131"/>
    </location>
</feature>
<feature type="strand" evidence="6">
    <location>
        <begin position="137"/>
        <end position="140"/>
    </location>
</feature>
<feature type="helix" evidence="6">
    <location>
        <begin position="142"/>
        <end position="147"/>
    </location>
</feature>
<feature type="strand" evidence="6">
    <location>
        <begin position="152"/>
        <end position="156"/>
    </location>
</feature>
<feature type="helix" evidence="6">
    <location>
        <begin position="162"/>
        <end position="168"/>
    </location>
</feature>
<feature type="helix" evidence="6">
    <location>
        <begin position="172"/>
        <end position="186"/>
    </location>
</feature>
<feature type="helix" evidence="6">
    <location>
        <begin position="188"/>
        <end position="190"/>
    </location>
</feature>
<feature type="strand" evidence="6">
    <location>
        <begin position="191"/>
        <end position="195"/>
    </location>
</feature>
<feature type="helix" evidence="6">
    <location>
        <begin position="201"/>
        <end position="217"/>
    </location>
</feature>
<feature type="strand" evidence="6">
    <location>
        <begin position="221"/>
        <end position="223"/>
    </location>
</feature>
<feature type="strand" evidence="6">
    <location>
        <begin position="227"/>
        <end position="232"/>
    </location>
</feature>
<feature type="helix" evidence="6">
    <location>
        <begin position="235"/>
        <end position="246"/>
    </location>
</feature>
<feature type="helix" evidence="6">
    <location>
        <begin position="268"/>
        <end position="275"/>
    </location>
</feature>
<feature type="turn" evidence="6">
    <location>
        <begin position="276"/>
        <end position="278"/>
    </location>
</feature>
<feature type="helix" evidence="6">
    <location>
        <begin position="282"/>
        <end position="292"/>
    </location>
</feature>
<feature type="turn" evidence="6">
    <location>
        <begin position="297"/>
        <end position="299"/>
    </location>
</feature>
<feature type="helix" evidence="6">
    <location>
        <begin position="317"/>
        <end position="332"/>
    </location>
</feature>
<feature type="helix" evidence="6">
    <location>
        <begin position="341"/>
        <end position="355"/>
    </location>
</feature>
<feature type="helix" evidence="6">
    <location>
        <begin position="358"/>
        <end position="373"/>
    </location>
</feature>
<feature type="helix" evidence="6">
    <location>
        <begin position="383"/>
        <end position="387"/>
    </location>
</feature>
<feature type="helix" evidence="6">
    <location>
        <begin position="389"/>
        <end position="393"/>
    </location>
</feature>
<feature type="helix" evidence="6">
    <location>
        <begin position="401"/>
        <end position="404"/>
    </location>
</feature>
<feature type="helix" evidence="6">
    <location>
        <begin position="408"/>
        <end position="411"/>
    </location>
</feature>
<feature type="strand" evidence="7">
    <location>
        <begin position="414"/>
        <end position="416"/>
    </location>
</feature>
<feature type="strand" evidence="6">
    <location>
        <begin position="424"/>
        <end position="427"/>
    </location>
</feature>
<feature type="helix" evidence="6">
    <location>
        <begin position="428"/>
        <end position="430"/>
    </location>
</feature>
<feature type="helix" evidence="6">
    <location>
        <begin position="431"/>
        <end position="442"/>
    </location>
</feature>
<feature type="turn" evidence="6">
    <location>
        <begin position="444"/>
        <end position="446"/>
    </location>
</feature>
<feature type="strand" evidence="6">
    <location>
        <begin position="447"/>
        <end position="455"/>
    </location>
</feature>
<feature type="helix" evidence="6">
    <location>
        <begin position="458"/>
        <end position="470"/>
    </location>
</feature>
<feature type="helix" evidence="6">
    <location>
        <begin position="472"/>
        <end position="474"/>
    </location>
</feature>
<feature type="helix" evidence="6">
    <location>
        <begin position="475"/>
        <end position="483"/>
    </location>
</feature>
<feature type="strand" evidence="6">
    <location>
        <begin position="489"/>
        <end position="491"/>
    </location>
</feature>
<feature type="helix" evidence="6">
    <location>
        <begin position="496"/>
        <end position="499"/>
    </location>
</feature>
<feature type="strand" evidence="7">
    <location>
        <begin position="502"/>
        <end position="504"/>
    </location>
</feature>
<feature type="helix" evidence="7">
    <location>
        <begin position="507"/>
        <end position="510"/>
    </location>
</feature>
<feature type="helix" evidence="6">
    <location>
        <begin position="513"/>
        <end position="519"/>
    </location>
</feature>
<feature type="helix" evidence="6">
    <location>
        <begin position="521"/>
        <end position="531"/>
    </location>
</feature>
<feature type="turn" evidence="6">
    <location>
        <begin position="532"/>
        <end position="535"/>
    </location>
</feature>
<feature type="strand" evidence="6">
    <location>
        <begin position="537"/>
        <end position="549"/>
    </location>
</feature>
<feature type="helix" evidence="6">
    <location>
        <begin position="554"/>
        <end position="556"/>
    </location>
</feature>
<feature type="strand" evidence="6">
    <location>
        <begin position="560"/>
        <end position="562"/>
    </location>
</feature>
<feature type="turn" evidence="6">
    <location>
        <begin position="564"/>
        <end position="566"/>
    </location>
</feature>
<feature type="strand" evidence="6">
    <location>
        <begin position="569"/>
        <end position="573"/>
    </location>
</feature>
<feature type="helix" evidence="6">
    <location>
        <begin position="575"/>
        <end position="579"/>
    </location>
</feature>
<feature type="turn" evidence="6">
    <location>
        <begin position="580"/>
        <end position="582"/>
    </location>
</feature>
<feature type="strand" evidence="6">
    <location>
        <begin position="584"/>
        <end position="591"/>
    </location>
</feature>
<feature type="helix" evidence="6">
    <location>
        <begin position="592"/>
        <end position="608"/>
    </location>
</feature>
<feature type="helix" evidence="6">
    <location>
        <begin position="614"/>
        <end position="616"/>
    </location>
</feature>
<feature type="helix" evidence="6">
    <location>
        <begin position="622"/>
        <end position="630"/>
    </location>
</feature>
<feature type="helix" evidence="6">
    <location>
        <begin position="642"/>
        <end position="651"/>
    </location>
</feature>
<feature type="helix" evidence="6">
    <location>
        <begin position="656"/>
        <end position="665"/>
    </location>
</feature>
<feature type="helix" evidence="6">
    <location>
        <begin position="668"/>
        <end position="672"/>
    </location>
</feature>
<feature type="helix" evidence="6">
    <location>
        <begin position="675"/>
        <end position="683"/>
    </location>
</feature>
<feature type="helix" evidence="6">
    <location>
        <begin position="694"/>
        <end position="700"/>
    </location>
</feature>
<feature type="turn" evidence="6">
    <location>
        <begin position="701"/>
        <end position="709"/>
    </location>
</feature>
<feature type="helix" evidence="6">
    <location>
        <begin position="714"/>
        <end position="725"/>
    </location>
</feature>
<feature type="helix" evidence="6">
    <location>
        <begin position="729"/>
        <end position="741"/>
    </location>
</feature>
<feature type="helix" evidence="6">
    <location>
        <begin position="744"/>
        <end position="760"/>
    </location>
</feature>
<feature type="helix" evidence="6">
    <location>
        <begin position="765"/>
        <end position="781"/>
    </location>
</feature>
<feature type="helix" evidence="6">
    <location>
        <begin position="785"/>
        <end position="804"/>
    </location>
</feature>
<feature type="helix" evidence="6">
    <location>
        <begin position="806"/>
        <end position="816"/>
    </location>
</feature>
<feature type="turn" evidence="6">
    <location>
        <begin position="817"/>
        <end position="819"/>
    </location>
</feature>
<feature type="helix" evidence="6">
    <location>
        <begin position="821"/>
        <end position="833"/>
    </location>
</feature>
<feature type="strand" evidence="6">
    <location>
        <begin position="837"/>
        <end position="839"/>
    </location>
</feature>
<feature type="turn" evidence="6">
    <location>
        <begin position="843"/>
        <end position="845"/>
    </location>
</feature>
<feature type="strand" evidence="6">
    <location>
        <begin position="851"/>
        <end position="853"/>
    </location>
</feature>
<feature type="strand" evidence="6">
    <location>
        <begin position="856"/>
        <end position="858"/>
    </location>
</feature>
<feature type="helix" evidence="7">
    <location>
        <begin position="861"/>
        <end position="863"/>
    </location>
</feature>
<feature type="helix" evidence="6">
    <location>
        <begin position="869"/>
        <end position="881"/>
    </location>
</feature>
<feature type="helix" evidence="6">
    <location>
        <begin position="888"/>
        <end position="894"/>
    </location>
</feature>
<feature type="helix" evidence="6">
    <location>
        <begin position="899"/>
        <end position="910"/>
    </location>
</feature>
<feature type="turn" evidence="6">
    <location>
        <begin position="911"/>
        <end position="914"/>
    </location>
</feature>
<feature type="helix" evidence="6">
    <location>
        <begin position="915"/>
        <end position="917"/>
    </location>
</feature>
<feature type="helix" evidence="6">
    <location>
        <begin position="921"/>
        <end position="932"/>
    </location>
</feature>
<feature type="helix" evidence="7">
    <location>
        <begin position="975"/>
        <end position="986"/>
    </location>
</feature>
<feature type="turn" evidence="7">
    <location>
        <begin position="994"/>
        <end position="998"/>
    </location>
</feature>
<feature type="helix" evidence="7">
    <location>
        <begin position="999"/>
        <end position="1005"/>
    </location>
</feature>
<feature type="helix" evidence="7">
    <location>
        <begin position="1010"/>
        <end position="1015"/>
    </location>
</feature>
<feature type="strand" evidence="7">
    <location>
        <begin position="1023"/>
        <end position="1029"/>
    </location>
</feature>
<feature type="strand" evidence="7">
    <location>
        <begin position="1031"/>
        <end position="1037"/>
    </location>
</feature>
<feature type="strand" evidence="7">
    <location>
        <begin position="1043"/>
        <end position="1048"/>
    </location>
</feature>
<feature type="strand" evidence="7">
    <location>
        <begin position="1057"/>
        <end position="1060"/>
    </location>
</feature>
<feature type="helix" evidence="7">
    <location>
        <begin position="1062"/>
        <end position="1068"/>
    </location>
</feature>
<feature type="helix" evidence="7">
    <location>
        <begin position="1069"/>
        <end position="1071"/>
    </location>
</feature>
<feature type="strand" evidence="7">
    <location>
        <begin position="1077"/>
        <end position="1087"/>
    </location>
</feature>
<feature type="strand" evidence="7">
    <location>
        <begin position="1090"/>
        <end position="1098"/>
    </location>
</feature>
<comment type="function">
    <text evidence="2">DNA polymerase III is a complex, multichain enzyme responsible for most of the replicative synthesis in bacteria. Pol III also exhibits 3' to 5' exonuclease activity. The alpha chain is the DNA polymerase (By similarity).</text>
</comment>
<comment type="catalytic activity">
    <reaction>
        <text>DNA(n) + a 2'-deoxyribonucleoside 5'-triphosphate = DNA(n+1) + diphosphate</text>
        <dbReference type="Rhea" id="RHEA:22508"/>
        <dbReference type="Rhea" id="RHEA-COMP:17339"/>
        <dbReference type="Rhea" id="RHEA-COMP:17340"/>
        <dbReference type="ChEBI" id="CHEBI:33019"/>
        <dbReference type="ChEBI" id="CHEBI:61560"/>
        <dbReference type="ChEBI" id="CHEBI:173112"/>
        <dbReference type="EC" id="2.7.7.7"/>
    </reaction>
</comment>
<comment type="subunit">
    <text evidence="2 3 4">The Pol III holoenzyme complex contains at least 10 different subunits organized into 3 functionally essential subassemblies: the Pol III core, the beta sliding clamp processivity factor and the clamp-loading complex. The Pol III core (subunits alpha, epsilon and theta) contains the polymerase and the 3'-5' exonuclease proofreading activities. The polymerase is tethered to the template via the dimeric beta sliding clamp processivity factor. The clamp loader (also called gamma complex) assembles the beta sliding clamp onto the primed template and plays a central role in the organization and communication at the replication fork. The clamp-loading complex contains delta, delta', psi and chi, and 3 copies of either or both of two different DnaX proteins, gamma and tau. The DNA replisome complex has a single clamp loader (3 tau and 1 each of delta, delta', psi and chi subunits) which binds 3 Pol III cores (1 core on the leading strand and 2 on the lagging strand) each with a beta sliding clamp dimer (By similarity). Interacts with the beta-sliding clamp (DnaN) (PubMed:21219854). Co-immunoprecipitates with DarG in the presence and absence of darT (PubMed:32634279).</text>
</comment>
<comment type="subcellular location">
    <subcellularLocation>
        <location evidence="1">Cytoplasm</location>
    </subcellularLocation>
</comment>
<comment type="similarity">
    <text evidence="5">Belongs to the DNA polymerase type-C family. DnaE subfamily.</text>
</comment>
<protein>
    <recommendedName>
        <fullName>DNA polymerase III subunit alpha</fullName>
        <ecNumber>2.7.7.7</ecNumber>
    </recommendedName>
</protein>
<sequence>MSGSSAGSSFVHLHNHTEYSMLDGAAKITPMLAEVERLGMPAVGMTDHGNMFGASEFYNSATKAGIKPIIGVEAYIAPGSRFDTRRILWGDPSQKADDVSGSGSYTHLTMMAENATGLRNLFKLSSHASFEGQLSKWSRMDAELIAEHAEGIIITTGCPSGEVQTRLRLGQDREALEAAAKWREIVGPDNYFLELMDHGLTIERRVRDGLLEIGRALNIPPLATNDCHYVTRDAAHNHEALLCVQTGKTLSDPNRFKFDGDGYYLKSAAEMRQIWDDEVPGACDSTLLIAERVQSYADVWTPRDRMPVFPVPDGHDQASWLRHEVDAGLRRRFPAGPPDGYRERAAYEIDVICSKGFPSYFLIVADLISYARSAGIRVGPGRGSAAGSLVAYALGITDIDPIPHGLLFERFLNPERTSMPDIDIDFDDRRRGEMVRYAADKWGHDRVAQVITFGTIKTKAALKDSARIHYGQPGFAIADRITKALPPAIMAKDIPLSGITDPSHERYKEAAEVRGLIETDPDVRTIYQTARGLEGLIRNAGVHACAVIMSSEPLTEAIPLWKRPQDGAIITGWDYPACEAIGLLKMDFLGLRNLTIIGDAIDNVRANRGIDLDLESVPLDDKATYELLGRGDTLGVFQLDGGPMRDLLRRMQPTGFEDVVAVIALYRPGPMGMNAHNDYADRKNNRQAIKPIHPELEEPLREILAETYGLIVYQEQIMRIAQKVASYSLARADILRKAMGKKKREVLEKEFEGFSDGMQANGFSPAAIKALWDTILPFADYAFNKSHAAGYGMVSYWTAYLKANYPAEYMAGLLTSVGDDKDKAAVYLADCRKLGITVLPPDVNESGLNFASVGQDIRYGLGAVRNVGANVVGSLLQTRNDKGKFTDFSDYLNKIDISACNKKVTESLIKAGAFDSLGHARKGLFLVHSDAVDSVLGTKKAEALGQFDLFGSNDDGTGTADPVFTIKVPDDEWEDKHKLALEREMLGLYVSGHPLNGVAHLLAAQVDTAIPAILDGDVPNDAQVRVGGILASVNRRVNKNGMPWASAQLEDLTGGIEVMFFPHTYSSYGADIVDDAVVLVNAKVAVRDDRIALIANDLTVPDFSNAEVERPLAVSLPTRQCTFDKVSALKQVLARHPGTSQVHLRLISGDRITTLALDQSLRVTPSPALMGDLKELLGPGCLGS</sequence>
<evidence type="ECO:0000250" key="1"/>
<evidence type="ECO:0000250" key="2">
    <source>
        <dbReference type="UniProtKB" id="P10443"/>
    </source>
</evidence>
<evidence type="ECO:0000269" key="3">
    <source>
    </source>
</evidence>
<evidence type="ECO:0000269" key="4">
    <source>
    </source>
</evidence>
<evidence type="ECO:0000305" key="5"/>
<evidence type="ECO:0007829" key="6">
    <source>
        <dbReference type="PDB" id="5LEW"/>
    </source>
</evidence>
<evidence type="ECO:0007829" key="7">
    <source>
        <dbReference type="PDB" id="7PU7"/>
    </source>
</evidence>
<reference key="1">
    <citation type="journal article" date="1998" name="Nature">
        <title>Deciphering the biology of Mycobacterium tuberculosis from the complete genome sequence.</title>
        <authorList>
            <person name="Cole S.T."/>
            <person name="Brosch R."/>
            <person name="Parkhill J."/>
            <person name="Garnier T."/>
            <person name="Churcher C.M."/>
            <person name="Harris D.E."/>
            <person name="Gordon S.V."/>
            <person name="Eiglmeier K."/>
            <person name="Gas S."/>
            <person name="Barry C.E. III"/>
            <person name="Tekaia F."/>
            <person name="Badcock K."/>
            <person name="Basham D."/>
            <person name="Brown D."/>
            <person name="Chillingworth T."/>
            <person name="Connor R."/>
            <person name="Davies R.M."/>
            <person name="Devlin K."/>
            <person name="Feltwell T."/>
            <person name="Gentles S."/>
            <person name="Hamlin N."/>
            <person name="Holroyd S."/>
            <person name="Hornsby T."/>
            <person name="Jagels K."/>
            <person name="Krogh A."/>
            <person name="McLean J."/>
            <person name="Moule S."/>
            <person name="Murphy L.D."/>
            <person name="Oliver S."/>
            <person name="Osborne J."/>
            <person name="Quail M.A."/>
            <person name="Rajandream M.A."/>
            <person name="Rogers J."/>
            <person name="Rutter S."/>
            <person name="Seeger K."/>
            <person name="Skelton S."/>
            <person name="Squares S."/>
            <person name="Squares R."/>
            <person name="Sulston J.E."/>
            <person name="Taylor K."/>
            <person name="Whitehead S."/>
            <person name="Barrell B.G."/>
        </authorList>
    </citation>
    <scope>NUCLEOTIDE SEQUENCE [LARGE SCALE GENOMIC DNA]</scope>
    <source>
        <strain>ATCC 25618 / H37Rv</strain>
    </source>
</reference>
<reference key="2">
    <citation type="journal article" date="2011" name="Mol. Cell. Proteomics">
        <title>Proteogenomic analysis of Mycobacterium tuberculosis by high resolution mass spectrometry.</title>
        <authorList>
            <person name="Kelkar D.S."/>
            <person name="Kumar D."/>
            <person name="Kumar P."/>
            <person name="Balakrishnan L."/>
            <person name="Muthusamy B."/>
            <person name="Yadav A.K."/>
            <person name="Shrivastava P."/>
            <person name="Marimuthu A."/>
            <person name="Anand S."/>
            <person name="Sundaram H."/>
            <person name="Kingsbury R."/>
            <person name="Harsha H.C."/>
            <person name="Nair B."/>
            <person name="Prasad T.S."/>
            <person name="Chauhan D.S."/>
            <person name="Katoch K."/>
            <person name="Katoch V.M."/>
            <person name="Kumar P."/>
            <person name="Chaerkady R."/>
            <person name="Ramachandran S."/>
            <person name="Dash D."/>
            <person name="Pandey A."/>
        </authorList>
    </citation>
    <scope>IDENTIFICATION BY MASS SPECTROMETRY [LARGE SCALE ANALYSIS]</scope>
    <source>
        <strain>ATCC 25618 / H37Rv</strain>
    </source>
</reference>
<reference key="3">
    <citation type="journal article" date="2011" name="Biochem. Biophys. Res. Commun.">
        <title>Crystal structure of DNA polymerase III beta sliding clamp from Mycobacterium tuberculosis.</title>
        <authorList>
            <person name="Gui W.J."/>
            <person name="Lin S.Q."/>
            <person name="Chen Y.Y."/>
            <person name="Zhang X.E."/>
            <person name="Bi L.J."/>
            <person name="Jiang T."/>
        </authorList>
    </citation>
    <scope>INTERACTION WITH BETA SLIDING CLAMP (DNAN)</scope>
    <source>
        <strain>H37Rv</strain>
    </source>
</reference>
<reference key="4">
    <citation type="journal article" date="2020" name="Mol. Microbiol.">
        <title>Depletion of the DarG antitoxin in Mycobacterium tuberculosis triggers the DNA-damage response and leads to cell death.</title>
        <authorList>
            <person name="Zaveri A."/>
            <person name="Wang R."/>
            <person name="Botella L."/>
            <person name="Sharma R."/>
            <person name="Zhu L."/>
            <person name="Wallach J.B."/>
            <person name="Song N."/>
            <person name="Jansen R.S."/>
            <person name="Rhee K.Y."/>
            <person name="Ehrt S."/>
            <person name="Schnappinger D."/>
        </authorList>
    </citation>
    <scope>SUBUNIT</scope>
    <source>
        <strain>H37Rv</strain>
    </source>
</reference>
<name>DPO3A_MYCTU</name>
<keyword id="KW-0002">3D-structure</keyword>
<keyword id="KW-0963">Cytoplasm</keyword>
<keyword id="KW-0235">DNA replication</keyword>
<keyword id="KW-0239">DNA-directed DNA polymerase</keyword>
<keyword id="KW-0548">Nucleotidyltransferase</keyword>
<keyword id="KW-1185">Reference proteome</keyword>
<keyword id="KW-0808">Transferase</keyword>
<proteinExistence type="evidence at protein level"/>
<organism>
    <name type="scientific">Mycobacterium tuberculosis (strain ATCC 25618 / H37Rv)</name>
    <dbReference type="NCBI Taxonomy" id="83332"/>
    <lineage>
        <taxon>Bacteria</taxon>
        <taxon>Bacillati</taxon>
        <taxon>Actinomycetota</taxon>
        <taxon>Actinomycetes</taxon>
        <taxon>Mycobacteriales</taxon>
        <taxon>Mycobacteriaceae</taxon>
        <taxon>Mycobacterium</taxon>
        <taxon>Mycobacterium tuberculosis complex</taxon>
    </lineage>
</organism>